<comment type="function">
    <text evidence="2">Involved in basal resistance against pathogens.</text>
</comment>
<comment type="catalytic activity">
    <reaction>
        <text>(+)-neomenthol + NADP(+) = (1R,4S)-menthone + NADPH + H(+)</text>
        <dbReference type="Rhea" id="RHEA:23812"/>
        <dbReference type="ChEBI" id="CHEBI:15378"/>
        <dbReference type="ChEBI" id="CHEBI:15402"/>
        <dbReference type="ChEBI" id="CHEBI:15410"/>
        <dbReference type="ChEBI" id="CHEBI:57783"/>
        <dbReference type="ChEBI" id="CHEBI:58349"/>
        <dbReference type="EC" id="1.1.1.208"/>
    </reaction>
</comment>
<comment type="biophysicochemical properties">
    <kinetics>
        <KM evidence="2">35.1 uM for menthone</KM>
        <KM evidence="2">21.7 uM for NADPH</KM>
        <KM evidence="2">113.2 uM for neomenthol</KM>
        <KM evidence="2">76.7 uM for NADP</KM>
    </kinetics>
    <phDependence>
        <text evidence="2">Optimum pH is 9.0 for the forward reaction and 7.5 for the reverse reaction.</text>
    </phDependence>
</comment>
<comment type="subunit">
    <text evidence="2">Monomer.</text>
</comment>
<comment type="tissue specificity">
    <text evidence="2">Expressed in flowers and red fruit tissues. Not detected in leaves, stems, roots or green fruits.</text>
</comment>
<comment type="induction">
    <text evidence="2">Strongly induced by inoculation with an avirulent strain of pathogen, but not with a virulent strain. Induced by salicylic acid, ethylene, abscisic acid and drought. Not induced by cold, wounding or H(2)O(2).</text>
</comment>
<comment type="similarity">
    <text evidence="3">Belongs to the short-chain dehydrogenases/reductases (SDR) family.</text>
</comment>
<organism>
    <name type="scientific">Capsicum annuum</name>
    <name type="common">Capsicum pepper</name>
    <dbReference type="NCBI Taxonomy" id="4072"/>
    <lineage>
        <taxon>Eukaryota</taxon>
        <taxon>Viridiplantae</taxon>
        <taxon>Streptophyta</taxon>
        <taxon>Embryophyta</taxon>
        <taxon>Tracheophyta</taxon>
        <taxon>Spermatophyta</taxon>
        <taxon>Magnoliopsida</taxon>
        <taxon>eudicotyledons</taxon>
        <taxon>Gunneridae</taxon>
        <taxon>Pentapetalae</taxon>
        <taxon>asterids</taxon>
        <taxon>lamiids</taxon>
        <taxon>Solanales</taxon>
        <taxon>Solanaceae</taxon>
        <taxon>Solanoideae</taxon>
        <taxon>Capsiceae</taxon>
        <taxon>Capsicum</taxon>
    </lineage>
</organism>
<gene>
    <name type="primary">MNR1</name>
</gene>
<name>MNR1_CAPAN</name>
<protein>
    <recommendedName>
        <fullName>(+)-neomenthol dehydrogenase</fullName>
        <ecNumber>1.1.1.208</ecNumber>
    </recommendedName>
    <alternativeName>
        <fullName>Menthone:neomenthol reductase 1</fullName>
        <shortName>CaMNR1</shortName>
    </alternativeName>
</protein>
<keyword id="KW-0521">NADP</keyword>
<keyword id="KW-0560">Oxidoreductase</keyword>
<keyword id="KW-0611">Plant defense</keyword>
<evidence type="ECO:0000250" key="1"/>
<evidence type="ECO:0000269" key="2">
    <source>
    </source>
</evidence>
<evidence type="ECO:0000305" key="3"/>
<feature type="chain" id="PRO_0000349097" description="(+)-neomenthol dehydrogenase">
    <location>
        <begin position="1"/>
        <end position="314"/>
    </location>
</feature>
<feature type="active site" description="Proton acceptor" evidence="1">
    <location>
        <position position="239"/>
    </location>
</feature>
<feature type="binding site" evidence="1">
    <location>
        <begin position="13"/>
        <end position="36"/>
    </location>
    <ligand>
        <name>NADP(+)</name>
        <dbReference type="ChEBI" id="CHEBI:58349"/>
    </ligand>
</feature>
<feature type="binding site" evidence="1">
    <location>
        <position position="183"/>
    </location>
    <ligand>
        <name>substrate</name>
    </ligand>
</feature>
<reference key="1">
    <citation type="journal article" date="2008" name="Plant Physiol.">
        <title>A role for a menthone reductase in resistance against microbial pathogens in plants.</title>
        <authorList>
            <person name="Choi H.W."/>
            <person name="Lee B.G."/>
            <person name="Kim N.H."/>
            <person name="Park Y."/>
            <person name="Lim C.W."/>
            <person name="Song H.K."/>
            <person name="Hwang B.K."/>
        </authorList>
    </citation>
    <scope>NUCLEOTIDE SEQUENCE [MRNA]</scope>
    <scope>FUNCTION</scope>
    <scope>SUBUNIT</scope>
    <scope>INDUCTION</scope>
    <scope>TISSUE SPECIFICITY</scope>
    <scope>BIOPHYSICOCHEMICAL PROPERTIES</scope>
    <source>
        <strain>cv. Nockwang</strain>
    </source>
</reference>
<proteinExistence type="evidence at protein level"/>
<sequence>MAEKTTSTRYAVVTGGNKGIGYETCRQLASKGVVVVLTSRDEKKGIEAIERLKEESNFTDEHILFHQLDIMDPASISSLVNLIKTKFGRLDILINNAGISGVMVEGDVQVLKEILERYISIVFTEDENGEEGGWTKSGPGSVTNYELTKECIETNYYGAKRMTEAFIPLLQLSNSPRIVNVASSMGKLKLLCNKWAIEVLRDADSLTEEKVDQVVNEFLKDFTEKSTESKGWPSYFTAYKVSKASLIAYTRVLATKYPNFRINSVCPGYCKTDVNANTGSLTAGEGAESLVNLALLPNDGPSGLFFYRKEVTFF</sequence>
<accession>B2X050</accession>
<dbReference type="EC" id="1.1.1.208"/>
<dbReference type="EMBL" id="EF576664">
    <property type="protein sequence ID" value="ABU54321.1"/>
    <property type="molecule type" value="mRNA"/>
</dbReference>
<dbReference type="RefSeq" id="NP_001311494.1">
    <property type="nucleotide sequence ID" value="NM_001324565.1"/>
</dbReference>
<dbReference type="SMR" id="B2X050"/>
<dbReference type="EnsemblPlants" id="PHT74475">
    <property type="protein sequence ID" value="PHT74475"/>
    <property type="gene ID" value="T459_21752"/>
</dbReference>
<dbReference type="GeneID" id="107839158"/>
<dbReference type="Gramene" id="PHT74475">
    <property type="protein sequence ID" value="PHT74475"/>
    <property type="gene ID" value="T459_21752"/>
</dbReference>
<dbReference type="KEGG" id="cann:107839158"/>
<dbReference type="OMA" id="EKASDWP"/>
<dbReference type="OrthoDB" id="1933717at2759"/>
<dbReference type="BRENDA" id="1.1.1.208">
    <property type="organism ID" value="1169"/>
</dbReference>
<dbReference type="GO" id="GO:0047501">
    <property type="term" value="F:(+)-neomenthol dehydrogenase activity"/>
    <property type="evidence" value="ECO:0007669"/>
    <property type="project" value="UniProtKB-EC"/>
</dbReference>
<dbReference type="GO" id="GO:0006952">
    <property type="term" value="P:defense response"/>
    <property type="evidence" value="ECO:0007669"/>
    <property type="project" value="UniProtKB-KW"/>
</dbReference>
<dbReference type="CDD" id="cd05324">
    <property type="entry name" value="carb_red_PTCR-like_SDR_c"/>
    <property type="match status" value="1"/>
</dbReference>
<dbReference type="FunFam" id="3.40.50.720:FF:000312">
    <property type="entry name" value="(+)-neomenthol dehydrogenase"/>
    <property type="match status" value="1"/>
</dbReference>
<dbReference type="Gene3D" id="3.40.50.720">
    <property type="entry name" value="NAD(P)-binding Rossmann-like Domain"/>
    <property type="match status" value="1"/>
</dbReference>
<dbReference type="InterPro" id="IPR045313">
    <property type="entry name" value="CBR1-like"/>
</dbReference>
<dbReference type="InterPro" id="IPR036291">
    <property type="entry name" value="NAD(P)-bd_dom_sf"/>
</dbReference>
<dbReference type="InterPro" id="IPR002347">
    <property type="entry name" value="SDR_fam"/>
</dbReference>
<dbReference type="PANTHER" id="PTHR43490">
    <property type="entry name" value="(+)-NEOMENTHOL DEHYDROGENASE"/>
    <property type="match status" value="1"/>
</dbReference>
<dbReference type="PANTHER" id="PTHR43490:SF66">
    <property type="entry name" value="(+)-NEOMENTHOL DEHYDROGENASE-LIKE"/>
    <property type="match status" value="1"/>
</dbReference>
<dbReference type="Pfam" id="PF00106">
    <property type="entry name" value="adh_short"/>
    <property type="match status" value="1"/>
</dbReference>
<dbReference type="Pfam" id="PF13561">
    <property type="entry name" value="adh_short_C2"/>
    <property type="match status" value="1"/>
</dbReference>
<dbReference type="PRINTS" id="PR00081">
    <property type="entry name" value="GDHRDH"/>
</dbReference>
<dbReference type="PRINTS" id="PR00080">
    <property type="entry name" value="SDRFAMILY"/>
</dbReference>
<dbReference type="SUPFAM" id="SSF51735">
    <property type="entry name" value="NAD(P)-binding Rossmann-fold domains"/>
    <property type="match status" value="1"/>
</dbReference>